<evidence type="ECO:0000255" key="1">
    <source>
        <dbReference type="HAMAP-Rule" id="MF_00298"/>
    </source>
</evidence>
<dbReference type="EC" id="3.6.1.-" evidence="1"/>
<dbReference type="EMBL" id="CP001048">
    <property type="protein sequence ID" value="ACC90113.1"/>
    <property type="molecule type" value="Genomic_DNA"/>
</dbReference>
<dbReference type="RefSeq" id="WP_002211381.1">
    <property type="nucleotide sequence ID" value="NZ_CP009780.1"/>
</dbReference>
<dbReference type="SMR" id="B2JZ69"/>
<dbReference type="GeneID" id="57973848"/>
<dbReference type="KEGG" id="ypb:YPTS_3158"/>
<dbReference type="PATRIC" id="fig|502801.10.peg.2591"/>
<dbReference type="GO" id="GO:0005737">
    <property type="term" value="C:cytoplasm"/>
    <property type="evidence" value="ECO:0007669"/>
    <property type="project" value="TreeGrafter"/>
</dbReference>
<dbReference type="GO" id="GO:0034353">
    <property type="term" value="F:mRNA 5'-diphosphatase activity"/>
    <property type="evidence" value="ECO:0007669"/>
    <property type="project" value="TreeGrafter"/>
</dbReference>
<dbReference type="GO" id="GO:0006402">
    <property type="term" value="P:mRNA catabolic process"/>
    <property type="evidence" value="ECO:0007669"/>
    <property type="project" value="TreeGrafter"/>
</dbReference>
<dbReference type="CDD" id="cd03671">
    <property type="entry name" value="NUDIX_Ap4A_hydrolase_plant_like"/>
    <property type="match status" value="1"/>
</dbReference>
<dbReference type="FunFam" id="3.90.79.10:FF:000001">
    <property type="entry name" value="RNA pyrophosphohydrolase"/>
    <property type="match status" value="1"/>
</dbReference>
<dbReference type="Gene3D" id="3.90.79.10">
    <property type="entry name" value="Nucleoside Triphosphate Pyrophosphohydrolase"/>
    <property type="match status" value="1"/>
</dbReference>
<dbReference type="HAMAP" id="MF_00298">
    <property type="entry name" value="Nudix_RppH"/>
    <property type="match status" value="1"/>
</dbReference>
<dbReference type="InterPro" id="IPR020476">
    <property type="entry name" value="Nudix_hydrolase"/>
</dbReference>
<dbReference type="InterPro" id="IPR015797">
    <property type="entry name" value="NUDIX_hydrolase-like_dom_sf"/>
</dbReference>
<dbReference type="InterPro" id="IPR020084">
    <property type="entry name" value="NUDIX_hydrolase_CS"/>
</dbReference>
<dbReference type="InterPro" id="IPR000086">
    <property type="entry name" value="NUDIX_hydrolase_dom"/>
</dbReference>
<dbReference type="InterPro" id="IPR022927">
    <property type="entry name" value="RppH"/>
</dbReference>
<dbReference type="NCBIfam" id="NF001934">
    <property type="entry name" value="PRK00714.1-1"/>
    <property type="match status" value="1"/>
</dbReference>
<dbReference type="NCBIfam" id="NF001937">
    <property type="entry name" value="PRK00714.1-4"/>
    <property type="match status" value="1"/>
</dbReference>
<dbReference type="NCBIfam" id="NF001938">
    <property type="entry name" value="PRK00714.1-5"/>
    <property type="match status" value="1"/>
</dbReference>
<dbReference type="PANTHER" id="PTHR23114">
    <property type="entry name" value="M7GPPPN-MRNA HYDROLASE"/>
    <property type="match status" value="1"/>
</dbReference>
<dbReference type="PANTHER" id="PTHR23114:SF17">
    <property type="entry name" value="M7GPPPN-MRNA HYDROLASE"/>
    <property type="match status" value="1"/>
</dbReference>
<dbReference type="Pfam" id="PF00293">
    <property type="entry name" value="NUDIX"/>
    <property type="match status" value="1"/>
</dbReference>
<dbReference type="PRINTS" id="PR00502">
    <property type="entry name" value="NUDIXFAMILY"/>
</dbReference>
<dbReference type="SUPFAM" id="SSF55811">
    <property type="entry name" value="Nudix"/>
    <property type="match status" value="1"/>
</dbReference>
<dbReference type="PROSITE" id="PS51462">
    <property type="entry name" value="NUDIX"/>
    <property type="match status" value="1"/>
</dbReference>
<dbReference type="PROSITE" id="PS00893">
    <property type="entry name" value="NUDIX_BOX"/>
    <property type="match status" value="1"/>
</dbReference>
<feature type="chain" id="PRO_1000115308" description="RNA pyrophosphohydrolase">
    <location>
        <begin position="1"/>
        <end position="175"/>
    </location>
</feature>
<feature type="domain" description="Nudix hydrolase" evidence="1">
    <location>
        <begin position="6"/>
        <end position="149"/>
    </location>
</feature>
<feature type="short sequence motif" description="Nudix box">
    <location>
        <begin position="38"/>
        <end position="59"/>
    </location>
</feature>
<accession>B2JZ69</accession>
<proteinExistence type="inferred from homology"/>
<sequence>MIDDDGYRPNVGIVICNRQGEVLWARRYGQHSWQFPQGGINPGETPEQAMYRELFEEVGLNKKDVRILASTRNWLRYKLPKRLVRWDTKPVCIGQKQRWFLLQLMCNEAEINMQRSSTPEFDGWRWVSYWYPVRQVVSFKRDVYRRVMKEFAATVMPVQEVAPPRVPPAYRRKRG</sequence>
<keyword id="KW-0378">Hydrolase</keyword>
<gene>
    <name evidence="1" type="primary">rppH</name>
    <name evidence="1" type="synonym">nudH</name>
    <name type="ordered locus">YPTS_3158</name>
</gene>
<name>RPPH_YERPB</name>
<organism>
    <name type="scientific">Yersinia pseudotuberculosis serotype IB (strain PB1/+)</name>
    <dbReference type="NCBI Taxonomy" id="502801"/>
    <lineage>
        <taxon>Bacteria</taxon>
        <taxon>Pseudomonadati</taxon>
        <taxon>Pseudomonadota</taxon>
        <taxon>Gammaproteobacteria</taxon>
        <taxon>Enterobacterales</taxon>
        <taxon>Yersiniaceae</taxon>
        <taxon>Yersinia</taxon>
    </lineage>
</organism>
<protein>
    <recommendedName>
        <fullName evidence="1">RNA pyrophosphohydrolase</fullName>
        <ecNumber evidence="1">3.6.1.-</ecNumber>
    </recommendedName>
    <alternativeName>
        <fullName evidence="1">(Di)nucleoside polyphosphate hydrolase</fullName>
    </alternativeName>
</protein>
<comment type="function">
    <text evidence="1">Accelerates the degradation of transcripts by removing pyrophosphate from the 5'-end of triphosphorylated RNA, leading to a more labile monophosphorylated state that can stimulate subsequent ribonuclease cleavage.</text>
</comment>
<comment type="cofactor">
    <cofactor evidence="1">
        <name>a divalent metal cation</name>
        <dbReference type="ChEBI" id="CHEBI:60240"/>
    </cofactor>
</comment>
<comment type="similarity">
    <text evidence="1">Belongs to the Nudix hydrolase family. RppH subfamily.</text>
</comment>
<reference key="1">
    <citation type="submission" date="2008-04" db="EMBL/GenBank/DDBJ databases">
        <title>Complete sequence of Yersinia pseudotuberculosis PB1/+.</title>
        <authorList>
            <person name="Copeland A."/>
            <person name="Lucas S."/>
            <person name="Lapidus A."/>
            <person name="Glavina del Rio T."/>
            <person name="Dalin E."/>
            <person name="Tice H."/>
            <person name="Bruce D."/>
            <person name="Goodwin L."/>
            <person name="Pitluck S."/>
            <person name="Munk A.C."/>
            <person name="Brettin T."/>
            <person name="Detter J.C."/>
            <person name="Han C."/>
            <person name="Tapia R."/>
            <person name="Schmutz J."/>
            <person name="Larimer F."/>
            <person name="Land M."/>
            <person name="Hauser L."/>
            <person name="Challacombe J.F."/>
            <person name="Green L."/>
            <person name="Lindler L.E."/>
            <person name="Nikolich M.P."/>
            <person name="Richardson P."/>
        </authorList>
    </citation>
    <scope>NUCLEOTIDE SEQUENCE [LARGE SCALE GENOMIC DNA]</scope>
    <source>
        <strain>PB1/+</strain>
    </source>
</reference>